<reference key="1">
    <citation type="journal article" date="2004" name="Nat. Biotechnol.">
        <title>The genome sequence of the anaerobic, sulfate-reducing bacterium Desulfovibrio vulgaris Hildenborough.</title>
        <authorList>
            <person name="Heidelberg J.F."/>
            <person name="Seshadri R."/>
            <person name="Haveman S.A."/>
            <person name="Hemme C.L."/>
            <person name="Paulsen I.T."/>
            <person name="Kolonay J.F."/>
            <person name="Eisen J.A."/>
            <person name="Ward N.L."/>
            <person name="Methe B.A."/>
            <person name="Brinkac L.M."/>
            <person name="Daugherty S.C."/>
            <person name="DeBoy R.T."/>
            <person name="Dodson R.J."/>
            <person name="Durkin A.S."/>
            <person name="Madupu R."/>
            <person name="Nelson W.C."/>
            <person name="Sullivan S.A."/>
            <person name="Fouts D.E."/>
            <person name="Haft D.H."/>
            <person name="Selengut J."/>
            <person name="Peterson J.D."/>
            <person name="Davidsen T.M."/>
            <person name="Zafar N."/>
            <person name="Zhou L."/>
            <person name="Radune D."/>
            <person name="Dimitrov G."/>
            <person name="Hance M."/>
            <person name="Tran K."/>
            <person name="Khouri H.M."/>
            <person name="Gill J."/>
            <person name="Utterback T.R."/>
            <person name="Feldblyum T.V."/>
            <person name="Wall J.D."/>
            <person name="Voordouw G."/>
            <person name="Fraser C.M."/>
        </authorList>
    </citation>
    <scope>NUCLEOTIDE SEQUENCE [LARGE SCALE GENOMIC DNA]</scope>
    <source>
        <strain>ATCC 29579 / DSM 644 / CCUG 34227 / NCIMB 8303 / VKM B-1760 / Hildenborough</strain>
    </source>
</reference>
<protein>
    <recommendedName>
        <fullName evidence="1">2,3-bisphosphoglycerate-dependent phosphoglycerate mutase</fullName>
        <shortName evidence="1">BPG-dependent PGAM</shortName>
        <shortName evidence="1">PGAM</shortName>
        <shortName evidence="1">Phosphoglyceromutase</shortName>
        <shortName evidence="1">dPGM</shortName>
        <ecNumber evidence="1">5.4.2.11</ecNumber>
    </recommendedName>
</protein>
<proteinExistence type="inferred from homology"/>
<evidence type="ECO:0000255" key="1">
    <source>
        <dbReference type="HAMAP-Rule" id="MF_01039"/>
    </source>
</evidence>
<dbReference type="EC" id="5.4.2.11" evidence="1"/>
<dbReference type="EMBL" id="AE017285">
    <property type="protein sequence ID" value="AAS97407.1"/>
    <property type="molecule type" value="Genomic_DNA"/>
</dbReference>
<dbReference type="RefSeq" id="WP_010940195.1">
    <property type="nucleotide sequence ID" value="NC_002937.3"/>
</dbReference>
<dbReference type="RefSeq" id="YP_012147.1">
    <property type="nucleotide sequence ID" value="NC_002937.3"/>
</dbReference>
<dbReference type="SMR" id="Q727C0"/>
<dbReference type="IntAct" id="Q727C0">
    <property type="interactions" value="2"/>
</dbReference>
<dbReference type="STRING" id="882.DVU_2935"/>
<dbReference type="PaxDb" id="882-DVU_2935"/>
<dbReference type="EnsemblBacteria" id="AAS97407">
    <property type="protein sequence ID" value="AAS97407"/>
    <property type="gene ID" value="DVU_2935"/>
</dbReference>
<dbReference type="KEGG" id="dvu:DVU_2935"/>
<dbReference type="PATRIC" id="fig|882.5.peg.2656"/>
<dbReference type="eggNOG" id="COG0588">
    <property type="taxonomic scope" value="Bacteria"/>
</dbReference>
<dbReference type="HOGENOM" id="CLU_033323_1_1_7"/>
<dbReference type="OrthoDB" id="9781415at2"/>
<dbReference type="PhylomeDB" id="Q727C0"/>
<dbReference type="UniPathway" id="UPA00109">
    <property type="reaction ID" value="UER00186"/>
</dbReference>
<dbReference type="Proteomes" id="UP000002194">
    <property type="component" value="Chromosome"/>
</dbReference>
<dbReference type="GO" id="GO:0004619">
    <property type="term" value="F:phosphoglycerate mutase activity"/>
    <property type="evidence" value="ECO:0007669"/>
    <property type="project" value="UniProtKB-EC"/>
</dbReference>
<dbReference type="GO" id="GO:0006094">
    <property type="term" value="P:gluconeogenesis"/>
    <property type="evidence" value="ECO:0007669"/>
    <property type="project" value="UniProtKB-UniRule"/>
</dbReference>
<dbReference type="GO" id="GO:0006096">
    <property type="term" value="P:glycolytic process"/>
    <property type="evidence" value="ECO:0007669"/>
    <property type="project" value="UniProtKB-UniRule"/>
</dbReference>
<dbReference type="CDD" id="cd07067">
    <property type="entry name" value="HP_PGM_like"/>
    <property type="match status" value="1"/>
</dbReference>
<dbReference type="FunFam" id="3.40.50.1240:FF:000003">
    <property type="entry name" value="2,3-bisphosphoglycerate-dependent phosphoglycerate mutase"/>
    <property type="match status" value="1"/>
</dbReference>
<dbReference type="Gene3D" id="3.40.50.1240">
    <property type="entry name" value="Phosphoglycerate mutase-like"/>
    <property type="match status" value="1"/>
</dbReference>
<dbReference type="HAMAP" id="MF_01039">
    <property type="entry name" value="PGAM_GpmA"/>
    <property type="match status" value="1"/>
</dbReference>
<dbReference type="InterPro" id="IPR013078">
    <property type="entry name" value="His_Pase_superF_clade-1"/>
</dbReference>
<dbReference type="InterPro" id="IPR029033">
    <property type="entry name" value="His_PPase_superfam"/>
</dbReference>
<dbReference type="InterPro" id="IPR001345">
    <property type="entry name" value="PG/BPGM_mutase_AS"/>
</dbReference>
<dbReference type="InterPro" id="IPR005952">
    <property type="entry name" value="Phosphogly_mut1"/>
</dbReference>
<dbReference type="NCBIfam" id="TIGR01258">
    <property type="entry name" value="pgm_1"/>
    <property type="match status" value="1"/>
</dbReference>
<dbReference type="NCBIfam" id="NF010713">
    <property type="entry name" value="PRK14115.1"/>
    <property type="match status" value="1"/>
</dbReference>
<dbReference type="PANTHER" id="PTHR11931">
    <property type="entry name" value="PHOSPHOGLYCERATE MUTASE"/>
    <property type="match status" value="1"/>
</dbReference>
<dbReference type="Pfam" id="PF00300">
    <property type="entry name" value="His_Phos_1"/>
    <property type="match status" value="1"/>
</dbReference>
<dbReference type="PIRSF" id="PIRSF000709">
    <property type="entry name" value="6PFK_2-Ptase"/>
    <property type="match status" value="1"/>
</dbReference>
<dbReference type="SMART" id="SM00855">
    <property type="entry name" value="PGAM"/>
    <property type="match status" value="1"/>
</dbReference>
<dbReference type="SUPFAM" id="SSF53254">
    <property type="entry name" value="Phosphoglycerate mutase-like"/>
    <property type="match status" value="1"/>
</dbReference>
<dbReference type="PROSITE" id="PS00175">
    <property type="entry name" value="PG_MUTASE"/>
    <property type="match status" value="1"/>
</dbReference>
<comment type="function">
    <text evidence="1">Catalyzes the interconversion of 2-phosphoglycerate and 3-phosphoglycerate.</text>
</comment>
<comment type="catalytic activity">
    <reaction evidence="1">
        <text>(2R)-2-phosphoglycerate = (2R)-3-phosphoglycerate</text>
        <dbReference type="Rhea" id="RHEA:15901"/>
        <dbReference type="ChEBI" id="CHEBI:58272"/>
        <dbReference type="ChEBI" id="CHEBI:58289"/>
        <dbReference type="EC" id="5.4.2.11"/>
    </reaction>
</comment>
<comment type="pathway">
    <text evidence="1">Carbohydrate degradation; glycolysis; pyruvate from D-glyceraldehyde 3-phosphate: step 3/5.</text>
</comment>
<comment type="subunit">
    <text evidence="1">Homodimer.</text>
</comment>
<comment type="similarity">
    <text evidence="1">Belongs to the phosphoglycerate mutase family. BPG-dependent PGAM subfamily.</text>
</comment>
<sequence>MARLILLRHGQSAWNLENRFTGWTDVDLSPAGEAEALAAARLIRDEGLDFSVCHTSMLTRAIRTLHLVQQELDRLWTPVRKHWRLNERHYGALQGLDKRETAARHGEDQVFVWRRSYDVPPPVIAPDDPKHPVHDPRYADVPPDVLPCGESLEATVARVLPYWYDAIAPDLMAGRDVLVAAHGNSLRALVMHLDGLDREDVSRLDIPTGLPRLYELDAALRPVSYRYLGDPAEAEERARAVAAQGRLEKN</sequence>
<gene>
    <name evidence="1" type="primary">gpmA</name>
    <name type="synonym">gpm</name>
    <name type="ordered locus">DVU_2935</name>
</gene>
<organism>
    <name type="scientific">Nitratidesulfovibrio vulgaris (strain ATCC 29579 / DSM 644 / CCUG 34227 / NCIMB 8303 / VKM B-1760 / Hildenborough)</name>
    <name type="common">Desulfovibrio vulgaris</name>
    <dbReference type="NCBI Taxonomy" id="882"/>
    <lineage>
        <taxon>Bacteria</taxon>
        <taxon>Pseudomonadati</taxon>
        <taxon>Thermodesulfobacteriota</taxon>
        <taxon>Desulfovibrionia</taxon>
        <taxon>Desulfovibrionales</taxon>
        <taxon>Desulfovibrionaceae</taxon>
        <taxon>Nitratidesulfovibrio</taxon>
    </lineage>
</organism>
<feature type="chain" id="PRO_0000179872" description="2,3-bisphosphoglycerate-dependent phosphoglycerate mutase">
    <location>
        <begin position="1"/>
        <end position="250"/>
    </location>
</feature>
<feature type="active site" description="Tele-phosphohistidine intermediate" evidence="1">
    <location>
        <position position="9"/>
    </location>
</feature>
<feature type="active site" description="Proton donor/acceptor" evidence="1">
    <location>
        <position position="87"/>
    </location>
</feature>
<feature type="binding site" evidence="1">
    <location>
        <begin position="8"/>
        <end position="15"/>
    </location>
    <ligand>
        <name>substrate</name>
    </ligand>
</feature>
<feature type="binding site" evidence="1">
    <location>
        <begin position="21"/>
        <end position="22"/>
    </location>
    <ligand>
        <name>substrate</name>
    </ligand>
</feature>
<feature type="binding site" evidence="1">
    <location>
        <position position="60"/>
    </location>
    <ligand>
        <name>substrate</name>
    </ligand>
</feature>
<feature type="binding site" evidence="1">
    <location>
        <begin position="87"/>
        <end position="90"/>
    </location>
    <ligand>
        <name>substrate</name>
    </ligand>
</feature>
<feature type="binding site" evidence="1">
    <location>
        <position position="98"/>
    </location>
    <ligand>
        <name>substrate</name>
    </ligand>
</feature>
<feature type="binding site" evidence="1">
    <location>
        <begin position="114"/>
        <end position="115"/>
    </location>
    <ligand>
        <name>substrate</name>
    </ligand>
</feature>
<feature type="binding site" evidence="1">
    <location>
        <begin position="183"/>
        <end position="184"/>
    </location>
    <ligand>
        <name>substrate</name>
    </ligand>
</feature>
<feature type="site" description="Transition state stabilizer" evidence="1">
    <location>
        <position position="182"/>
    </location>
</feature>
<name>GPMA_NITV2</name>
<accession>Q727C0</accession>
<keyword id="KW-0312">Gluconeogenesis</keyword>
<keyword id="KW-0324">Glycolysis</keyword>
<keyword id="KW-0413">Isomerase</keyword>
<keyword id="KW-1185">Reference proteome</keyword>